<reference key="1">
    <citation type="journal article" date="2005" name="Nature">
        <title>The map-based sequence of the rice genome.</title>
        <authorList>
            <consortium name="International rice genome sequencing project (IRGSP)"/>
        </authorList>
    </citation>
    <scope>NUCLEOTIDE SEQUENCE [LARGE SCALE GENOMIC DNA]</scope>
    <source>
        <strain>cv. Nipponbare</strain>
    </source>
</reference>
<reference key="2">
    <citation type="journal article" date="2008" name="Nucleic Acids Res.">
        <title>The rice annotation project database (RAP-DB): 2008 update.</title>
        <authorList>
            <consortium name="The rice annotation project (RAP)"/>
        </authorList>
    </citation>
    <scope>GENOME REANNOTATION</scope>
    <source>
        <strain>cv. Nipponbare</strain>
    </source>
</reference>
<reference key="3">
    <citation type="journal article" date="2013" name="Rice">
        <title>Improvement of the Oryza sativa Nipponbare reference genome using next generation sequence and optical map data.</title>
        <authorList>
            <person name="Kawahara Y."/>
            <person name="de la Bastide M."/>
            <person name="Hamilton J.P."/>
            <person name="Kanamori H."/>
            <person name="McCombie W.R."/>
            <person name="Ouyang S."/>
            <person name="Schwartz D.C."/>
            <person name="Tanaka T."/>
            <person name="Wu J."/>
            <person name="Zhou S."/>
            <person name="Childs K.L."/>
            <person name="Davidson R.M."/>
            <person name="Lin H."/>
            <person name="Quesada-Ocampo L."/>
            <person name="Vaillancourt B."/>
            <person name="Sakai H."/>
            <person name="Lee S.S."/>
            <person name="Kim J."/>
            <person name="Numa H."/>
            <person name="Itoh T."/>
            <person name="Buell C.R."/>
            <person name="Matsumoto T."/>
        </authorList>
    </citation>
    <scope>GENOME REANNOTATION</scope>
    <source>
        <strain>cv. Nipponbare</strain>
    </source>
</reference>
<reference key="4">
    <citation type="journal article" date="2005" name="PLoS Biol.">
        <title>The genomes of Oryza sativa: a history of duplications.</title>
        <authorList>
            <person name="Yu J."/>
            <person name="Wang J."/>
            <person name="Lin W."/>
            <person name="Li S."/>
            <person name="Li H."/>
            <person name="Zhou J."/>
            <person name="Ni P."/>
            <person name="Dong W."/>
            <person name="Hu S."/>
            <person name="Zeng C."/>
            <person name="Zhang J."/>
            <person name="Zhang Y."/>
            <person name="Li R."/>
            <person name="Xu Z."/>
            <person name="Li S."/>
            <person name="Li X."/>
            <person name="Zheng H."/>
            <person name="Cong L."/>
            <person name="Lin L."/>
            <person name="Yin J."/>
            <person name="Geng J."/>
            <person name="Li G."/>
            <person name="Shi J."/>
            <person name="Liu J."/>
            <person name="Lv H."/>
            <person name="Li J."/>
            <person name="Wang J."/>
            <person name="Deng Y."/>
            <person name="Ran L."/>
            <person name="Shi X."/>
            <person name="Wang X."/>
            <person name="Wu Q."/>
            <person name="Li C."/>
            <person name="Ren X."/>
            <person name="Wang J."/>
            <person name="Wang X."/>
            <person name="Li D."/>
            <person name="Liu D."/>
            <person name="Zhang X."/>
            <person name="Ji Z."/>
            <person name="Zhao W."/>
            <person name="Sun Y."/>
            <person name="Zhang Z."/>
            <person name="Bao J."/>
            <person name="Han Y."/>
            <person name="Dong L."/>
            <person name="Ji J."/>
            <person name="Chen P."/>
            <person name="Wu S."/>
            <person name="Liu J."/>
            <person name="Xiao Y."/>
            <person name="Bu D."/>
            <person name="Tan J."/>
            <person name="Yang L."/>
            <person name="Ye C."/>
            <person name="Zhang J."/>
            <person name="Xu J."/>
            <person name="Zhou Y."/>
            <person name="Yu Y."/>
            <person name="Zhang B."/>
            <person name="Zhuang S."/>
            <person name="Wei H."/>
            <person name="Liu B."/>
            <person name="Lei M."/>
            <person name="Yu H."/>
            <person name="Li Y."/>
            <person name="Xu H."/>
            <person name="Wei S."/>
            <person name="He X."/>
            <person name="Fang L."/>
            <person name="Zhang Z."/>
            <person name="Zhang Y."/>
            <person name="Huang X."/>
            <person name="Su Z."/>
            <person name="Tong W."/>
            <person name="Li J."/>
            <person name="Tong Z."/>
            <person name="Li S."/>
            <person name="Ye J."/>
            <person name="Wang L."/>
            <person name="Fang L."/>
            <person name="Lei T."/>
            <person name="Chen C.-S."/>
            <person name="Chen H.-C."/>
            <person name="Xu Z."/>
            <person name="Li H."/>
            <person name="Huang H."/>
            <person name="Zhang F."/>
            <person name="Xu H."/>
            <person name="Li N."/>
            <person name="Zhao C."/>
            <person name="Li S."/>
            <person name="Dong L."/>
            <person name="Huang Y."/>
            <person name="Li L."/>
            <person name="Xi Y."/>
            <person name="Qi Q."/>
            <person name="Li W."/>
            <person name="Zhang B."/>
            <person name="Hu W."/>
            <person name="Zhang Y."/>
            <person name="Tian X."/>
            <person name="Jiao Y."/>
            <person name="Liang X."/>
            <person name="Jin J."/>
            <person name="Gao L."/>
            <person name="Zheng W."/>
            <person name="Hao B."/>
            <person name="Liu S.-M."/>
            <person name="Wang W."/>
            <person name="Yuan L."/>
            <person name="Cao M."/>
            <person name="McDermott J."/>
            <person name="Samudrala R."/>
            <person name="Wang J."/>
            <person name="Wong G.K.-S."/>
            <person name="Yang H."/>
        </authorList>
    </citation>
    <scope>NUCLEOTIDE SEQUENCE [LARGE SCALE GENOMIC DNA]</scope>
    <source>
        <strain>cv. Nipponbare</strain>
    </source>
</reference>
<reference key="5">
    <citation type="journal article" date="2003" name="Science">
        <title>Collection, mapping, and annotation of over 28,000 cDNA clones from japonica rice.</title>
        <authorList>
            <consortium name="The rice full-length cDNA consortium"/>
        </authorList>
    </citation>
    <scope>NUCLEOTIDE SEQUENCE [LARGE SCALE MRNA]</scope>
    <source>
        <strain>cv. Nipponbare</strain>
    </source>
</reference>
<reference key="6">
    <citation type="journal article" date="2004" name="Plant Physiol.">
        <title>Calcium sensors and their interacting protein kinases: genomics of the Arabidopsis and rice CBL-CIPK signaling networks.</title>
        <authorList>
            <person name="Kolukisaoglu U."/>
            <person name="Weinl S."/>
            <person name="Blazevic D."/>
            <person name="Batistic O."/>
            <person name="Kudla J."/>
        </authorList>
    </citation>
    <scope>GENE FAMILY</scope>
    <scope>NOMENCLATURE</scope>
</reference>
<reference key="7">
    <citation type="journal article" date="2007" name="Plant Physiol.">
        <title>Characterization of stress-responsive CIPK genes in rice for stress tolerance improvement.</title>
        <authorList>
            <person name="Xiang Y."/>
            <person name="Huang Y."/>
            <person name="Xiong L."/>
        </authorList>
    </citation>
    <scope>INDUCTION</scope>
</reference>
<evidence type="ECO:0000250" key="1"/>
<evidence type="ECO:0000255" key="2">
    <source>
        <dbReference type="PROSITE-ProRule" id="PRU00159"/>
    </source>
</evidence>
<evidence type="ECO:0000255" key="3">
    <source>
        <dbReference type="PROSITE-ProRule" id="PRU00256"/>
    </source>
</evidence>
<evidence type="ECO:0000255" key="4">
    <source>
        <dbReference type="PROSITE-ProRule" id="PRU10027"/>
    </source>
</evidence>
<evidence type="ECO:0000269" key="5">
    <source>
    </source>
</evidence>
<evidence type="ECO:0000305" key="6"/>
<protein>
    <recommendedName>
        <fullName>CBL-interacting protein kinase 29</fullName>
        <ecNumber>2.7.11.1</ecNumber>
    </recommendedName>
    <alternativeName>
        <fullName>OsCIPK29</fullName>
    </alternativeName>
</protein>
<organism>
    <name type="scientific">Oryza sativa subsp. japonica</name>
    <name type="common">Rice</name>
    <dbReference type="NCBI Taxonomy" id="39947"/>
    <lineage>
        <taxon>Eukaryota</taxon>
        <taxon>Viridiplantae</taxon>
        <taxon>Streptophyta</taxon>
        <taxon>Embryophyta</taxon>
        <taxon>Tracheophyta</taxon>
        <taxon>Spermatophyta</taxon>
        <taxon>Magnoliopsida</taxon>
        <taxon>Liliopsida</taxon>
        <taxon>Poales</taxon>
        <taxon>Poaceae</taxon>
        <taxon>BOP clade</taxon>
        <taxon>Oryzoideae</taxon>
        <taxon>Oryzeae</taxon>
        <taxon>Oryzinae</taxon>
        <taxon>Oryza</taxon>
        <taxon>Oryza sativa</taxon>
    </lineage>
</organism>
<dbReference type="EC" id="2.7.11.1"/>
<dbReference type="EMBL" id="AP003757">
    <property type="protein sequence ID" value="BAC79536.1"/>
    <property type="molecule type" value="Genomic_DNA"/>
</dbReference>
<dbReference type="EMBL" id="AP008213">
    <property type="protein sequence ID" value="BAF22548.1"/>
    <property type="status" value="ALT_INIT"/>
    <property type="molecule type" value="Genomic_DNA"/>
</dbReference>
<dbReference type="EMBL" id="AP014963">
    <property type="protein sequence ID" value="BAT03216.1"/>
    <property type="molecule type" value="Genomic_DNA"/>
</dbReference>
<dbReference type="EMBL" id="CM000144">
    <property type="protein sequence ID" value="EAZ41089.1"/>
    <property type="molecule type" value="Genomic_DNA"/>
</dbReference>
<dbReference type="EMBL" id="AK111746">
    <property type="protein sequence ID" value="BAG99394.1"/>
    <property type="molecule type" value="mRNA"/>
</dbReference>
<dbReference type="RefSeq" id="XP_015647683.1">
    <property type="nucleotide sequence ID" value="XM_015792197.1"/>
</dbReference>
<dbReference type="SMR" id="Q7XIW5"/>
<dbReference type="FunCoup" id="Q7XIW5">
    <property type="interactions" value="61"/>
</dbReference>
<dbReference type="STRING" id="39947.Q7XIW5"/>
<dbReference type="PaxDb" id="39947-Q7XIW5"/>
<dbReference type="EnsemblPlants" id="Os07t0678300-01">
    <property type="protein sequence ID" value="Os07t0678300-01"/>
    <property type="gene ID" value="Os07g0678300"/>
</dbReference>
<dbReference type="Gramene" id="Os07t0678300-01">
    <property type="protein sequence ID" value="Os07t0678300-01"/>
    <property type="gene ID" value="Os07g0678300"/>
</dbReference>
<dbReference type="KEGG" id="dosa:Os07g0678300"/>
<dbReference type="eggNOG" id="KOG0583">
    <property type="taxonomic scope" value="Eukaryota"/>
</dbReference>
<dbReference type="HOGENOM" id="CLU_000288_59_0_1"/>
<dbReference type="InParanoid" id="Q7XIW5"/>
<dbReference type="OMA" id="KFRCPSW"/>
<dbReference type="OrthoDB" id="193931at2759"/>
<dbReference type="Proteomes" id="UP000000763">
    <property type="component" value="Chromosome 7"/>
</dbReference>
<dbReference type="Proteomes" id="UP000007752">
    <property type="component" value="Chromosome 7"/>
</dbReference>
<dbReference type="Proteomes" id="UP000059680">
    <property type="component" value="Chromosome 7"/>
</dbReference>
<dbReference type="GO" id="GO:0005524">
    <property type="term" value="F:ATP binding"/>
    <property type="evidence" value="ECO:0007669"/>
    <property type="project" value="UniProtKB-KW"/>
</dbReference>
<dbReference type="GO" id="GO:0106310">
    <property type="term" value="F:protein serine kinase activity"/>
    <property type="evidence" value="ECO:0007669"/>
    <property type="project" value="RHEA"/>
</dbReference>
<dbReference type="GO" id="GO:0004674">
    <property type="term" value="F:protein serine/threonine kinase activity"/>
    <property type="evidence" value="ECO:0000318"/>
    <property type="project" value="GO_Central"/>
</dbReference>
<dbReference type="GO" id="GO:0007165">
    <property type="term" value="P:signal transduction"/>
    <property type="evidence" value="ECO:0000318"/>
    <property type="project" value="GO_Central"/>
</dbReference>
<dbReference type="CDD" id="cd12195">
    <property type="entry name" value="CIPK_C"/>
    <property type="match status" value="1"/>
</dbReference>
<dbReference type="FunFam" id="1.10.510.10:FF:000571">
    <property type="entry name" value="Maternal embryonic leucine zipper kinase"/>
    <property type="match status" value="1"/>
</dbReference>
<dbReference type="Gene3D" id="3.30.310.80">
    <property type="entry name" value="Kinase associated domain 1, KA1"/>
    <property type="match status" value="1"/>
</dbReference>
<dbReference type="Gene3D" id="3.30.200.20">
    <property type="entry name" value="Phosphorylase Kinase, domain 1"/>
    <property type="match status" value="1"/>
</dbReference>
<dbReference type="Gene3D" id="1.10.510.10">
    <property type="entry name" value="Transferase(Phosphotransferase) domain 1"/>
    <property type="match status" value="1"/>
</dbReference>
<dbReference type="InterPro" id="IPR011009">
    <property type="entry name" value="Kinase-like_dom_sf"/>
</dbReference>
<dbReference type="InterPro" id="IPR018451">
    <property type="entry name" value="NAF/FISL_domain"/>
</dbReference>
<dbReference type="InterPro" id="IPR004041">
    <property type="entry name" value="NAF_dom"/>
</dbReference>
<dbReference type="InterPro" id="IPR000719">
    <property type="entry name" value="Prot_kinase_dom"/>
</dbReference>
<dbReference type="InterPro" id="IPR017441">
    <property type="entry name" value="Protein_kinase_ATP_BS"/>
</dbReference>
<dbReference type="InterPro" id="IPR008271">
    <property type="entry name" value="Ser/Thr_kinase_AS"/>
</dbReference>
<dbReference type="PANTHER" id="PTHR43895">
    <property type="entry name" value="CALCIUM/CALMODULIN-DEPENDENT PROTEIN KINASE KINASE-RELATED"/>
    <property type="match status" value="1"/>
</dbReference>
<dbReference type="PANTHER" id="PTHR43895:SF151">
    <property type="entry name" value="CBL-INTERACTING SERINE_THREONINE-PROTEIN KINASE 11"/>
    <property type="match status" value="1"/>
</dbReference>
<dbReference type="Pfam" id="PF03822">
    <property type="entry name" value="NAF"/>
    <property type="match status" value="1"/>
</dbReference>
<dbReference type="Pfam" id="PF00069">
    <property type="entry name" value="Pkinase"/>
    <property type="match status" value="1"/>
</dbReference>
<dbReference type="SMART" id="SM00220">
    <property type="entry name" value="S_TKc"/>
    <property type="match status" value="1"/>
</dbReference>
<dbReference type="SUPFAM" id="SSF56112">
    <property type="entry name" value="Protein kinase-like (PK-like)"/>
    <property type="match status" value="1"/>
</dbReference>
<dbReference type="PROSITE" id="PS50816">
    <property type="entry name" value="NAF"/>
    <property type="match status" value="1"/>
</dbReference>
<dbReference type="PROSITE" id="PS00107">
    <property type="entry name" value="PROTEIN_KINASE_ATP"/>
    <property type="match status" value="1"/>
</dbReference>
<dbReference type="PROSITE" id="PS50011">
    <property type="entry name" value="PROTEIN_KINASE_DOM"/>
    <property type="match status" value="1"/>
</dbReference>
<dbReference type="PROSITE" id="PS00108">
    <property type="entry name" value="PROTEIN_KINASE_ST"/>
    <property type="match status" value="1"/>
</dbReference>
<comment type="function">
    <text evidence="1">CIPK serine-threonine protein kinases interact with CBL proteins. Binding of a CBL protein to the regulatory NAF domain of CIPK protein lead to the activation of the kinase in a calcium-dependent manner (By similarity).</text>
</comment>
<comment type="catalytic activity">
    <reaction>
        <text>L-seryl-[protein] + ATP = O-phospho-L-seryl-[protein] + ADP + H(+)</text>
        <dbReference type="Rhea" id="RHEA:17989"/>
        <dbReference type="Rhea" id="RHEA-COMP:9863"/>
        <dbReference type="Rhea" id="RHEA-COMP:11604"/>
        <dbReference type="ChEBI" id="CHEBI:15378"/>
        <dbReference type="ChEBI" id="CHEBI:29999"/>
        <dbReference type="ChEBI" id="CHEBI:30616"/>
        <dbReference type="ChEBI" id="CHEBI:83421"/>
        <dbReference type="ChEBI" id="CHEBI:456216"/>
        <dbReference type="EC" id="2.7.11.1"/>
    </reaction>
</comment>
<comment type="catalytic activity">
    <reaction>
        <text>L-threonyl-[protein] + ATP = O-phospho-L-threonyl-[protein] + ADP + H(+)</text>
        <dbReference type="Rhea" id="RHEA:46608"/>
        <dbReference type="Rhea" id="RHEA-COMP:11060"/>
        <dbReference type="Rhea" id="RHEA-COMP:11605"/>
        <dbReference type="ChEBI" id="CHEBI:15378"/>
        <dbReference type="ChEBI" id="CHEBI:30013"/>
        <dbReference type="ChEBI" id="CHEBI:30616"/>
        <dbReference type="ChEBI" id="CHEBI:61977"/>
        <dbReference type="ChEBI" id="CHEBI:456216"/>
        <dbReference type="EC" id="2.7.11.1"/>
    </reaction>
</comment>
<comment type="cofactor">
    <cofactor evidence="1">
        <name>Mn(2+)</name>
        <dbReference type="ChEBI" id="CHEBI:29035"/>
    </cofactor>
</comment>
<comment type="induction">
    <text evidence="5">By drought and salt stresses and abscisic acid (ABA).</text>
</comment>
<comment type="domain">
    <text evidence="1">The activation loop within the kinase domain is the target of phosphorylation/activation by upstream protein kinases. The PPI motif mediates the interaction with the ABI (abscisic acid-insensitive) phosphatases (By similarity).</text>
</comment>
<comment type="similarity">
    <text evidence="6">Belongs to the protein kinase superfamily. CAMK Ser/Thr protein kinase family. SNF1 subfamily.</text>
</comment>
<comment type="sequence caution" evidence="6">
    <conflict type="erroneous initiation">
        <sequence resource="EMBL-CDS" id="BAF22548"/>
    </conflict>
</comment>
<proteinExistence type="evidence at transcript level"/>
<feature type="chain" id="PRO_0000338387" description="CBL-interacting protein kinase 29">
    <location>
        <begin position="1"/>
        <end position="443"/>
    </location>
</feature>
<feature type="domain" description="Protein kinase" evidence="2">
    <location>
        <begin position="32"/>
        <end position="292"/>
    </location>
</feature>
<feature type="domain" description="NAF" evidence="3">
    <location>
        <begin position="313"/>
        <end position="347"/>
    </location>
</feature>
<feature type="region of interest" description="Activation loop" evidence="1">
    <location>
        <begin position="182"/>
        <end position="207"/>
    </location>
</feature>
<feature type="region of interest" description="PPI" evidence="1">
    <location>
        <begin position="350"/>
        <end position="379"/>
    </location>
</feature>
<feature type="active site" description="Proton acceptor" evidence="2 4">
    <location>
        <position position="164"/>
    </location>
</feature>
<feature type="binding site" evidence="2">
    <location>
        <begin position="38"/>
        <end position="46"/>
    </location>
    <ligand>
        <name>ATP</name>
        <dbReference type="ChEBI" id="CHEBI:30616"/>
    </ligand>
</feature>
<feature type="binding site" evidence="2">
    <location>
        <position position="61"/>
    </location>
    <ligand>
        <name>ATP</name>
        <dbReference type="ChEBI" id="CHEBI:30616"/>
    </ligand>
</feature>
<sequence>MPPSTGSVPPAASTPAAGDEATAAGRVLLGRYELGGLLGRGASAKVYLARDLLTGRDVAIKSFPNPRHGGGLRGGEEDVLLRPAPIEREAAILPRLRHRHVMRLREILATRKKVHFVLDLAAGGELFSLLDASGRMTEDLARHYFRQLISAVRYCHSRGVYHRDIKPENLLLDDAGDLKVADFGLGAVADGALHHTLCGTPAYVAPEILSRKGYNPAKVDIWSCGVVLFVLAAGYLPFNDASLVNMYRKIYAGKFRCPAWFSPELRCLVRRILDPNPATRIDTEEIITHPWFRQDASHFAMAQLMQHGHDEEAKFKTEFKEDDMARDMTAFDILACSPGSDLSGLFGAEPGKERVFVGEPAAAVLSRVEEAGKKEGYMVTREGKKGTGPVYVKGENGGIVAKVCVFKIADAVSVVEVVKGYGAEAARFWKARLEPAMKPPAAI</sequence>
<name>CIPKT_ORYSJ</name>
<gene>
    <name type="primary">CIPK29</name>
    <name type="ordered locus">Os07g0678300</name>
    <name type="ordered locus">LOC_Os07g48090</name>
    <name type="ORF">OJ1409_C08.10</name>
    <name type="ORF">OsJ_024572</name>
</gene>
<accession>Q7XIW5</accession>
<accession>B7F447</accession>
<accession>Q0D3M5</accession>
<keyword id="KW-0067">ATP-binding</keyword>
<keyword id="KW-0418">Kinase</keyword>
<keyword id="KW-0464">Manganese</keyword>
<keyword id="KW-0547">Nucleotide-binding</keyword>
<keyword id="KW-1185">Reference proteome</keyword>
<keyword id="KW-0723">Serine/threonine-protein kinase</keyword>
<keyword id="KW-0808">Transferase</keyword>